<name>NFUA_XYLF2</name>
<accession>B2I9W5</accession>
<protein>
    <recommendedName>
        <fullName evidence="1">Fe/S biogenesis protein NfuA</fullName>
    </recommendedName>
</protein>
<organism>
    <name type="scientific">Xylella fastidiosa (strain M23)</name>
    <dbReference type="NCBI Taxonomy" id="405441"/>
    <lineage>
        <taxon>Bacteria</taxon>
        <taxon>Pseudomonadati</taxon>
        <taxon>Pseudomonadota</taxon>
        <taxon>Gammaproteobacteria</taxon>
        <taxon>Lysobacterales</taxon>
        <taxon>Lysobacteraceae</taxon>
        <taxon>Xylella</taxon>
    </lineage>
</organism>
<dbReference type="EMBL" id="CP001011">
    <property type="protein sequence ID" value="ACB93482.1"/>
    <property type="molecule type" value="Genomic_DNA"/>
</dbReference>
<dbReference type="RefSeq" id="WP_004087536.1">
    <property type="nucleotide sequence ID" value="NC_010577.1"/>
</dbReference>
<dbReference type="SMR" id="B2I9W5"/>
<dbReference type="KEGG" id="xfn:XfasM23_2084"/>
<dbReference type="HOGENOM" id="CLU_094569_0_0_6"/>
<dbReference type="Proteomes" id="UP000001698">
    <property type="component" value="Chromosome"/>
</dbReference>
<dbReference type="GO" id="GO:0051539">
    <property type="term" value="F:4 iron, 4 sulfur cluster binding"/>
    <property type="evidence" value="ECO:0007669"/>
    <property type="project" value="UniProtKB-UniRule"/>
</dbReference>
<dbReference type="GO" id="GO:0005506">
    <property type="term" value="F:iron ion binding"/>
    <property type="evidence" value="ECO:0007669"/>
    <property type="project" value="InterPro"/>
</dbReference>
<dbReference type="GO" id="GO:0016226">
    <property type="term" value="P:iron-sulfur cluster assembly"/>
    <property type="evidence" value="ECO:0007669"/>
    <property type="project" value="UniProtKB-UniRule"/>
</dbReference>
<dbReference type="GO" id="GO:0051604">
    <property type="term" value="P:protein maturation"/>
    <property type="evidence" value="ECO:0007669"/>
    <property type="project" value="UniProtKB-UniRule"/>
</dbReference>
<dbReference type="Gene3D" id="3.30.300.130">
    <property type="entry name" value="Fe-S cluster assembly (FSCA)"/>
    <property type="match status" value="1"/>
</dbReference>
<dbReference type="Gene3D" id="2.60.300.12">
    <property type="entry name" value="HesB-like domain"/>
    <property type="match status" value="1"/>
</dbReference>
<dbReference type="HAMAP" id="MF_01637">
    <property type="entry name" value="Fe_S_biogen_NfuA"/>
    <property type="match status" value="1"/>
</dbReference>
<dbReference type="InterPro" id="IPR017726">
    <property type="entry name" value="Fe/S_biogenesis_protein_NfuA"/>
</dbReference>
<dbReference type="InterPro" id="IPR034904">
    <property type="entry name" value="FSCA_dom_sf"/>
</dbReference>
<dbReference type="InterPro" id="IPR035903">
    <property type="entry name" value="HesB-like_dom_sf"/>
</dbReference>
<dbReference type="InterPro" id="IPR001075">
    <property type="entry name" value="NIF_FeS_clus_asmbl_NifU_C"/>
</dbReference>
<dbReference type="PANTHER" id="PTHR11178:SF51">
    <property type="entry name" value="FE_S BIOGENESIS PROTEIN NFUA"/>
    <property type="match status" value="1"/>
</dbReference>
<dbReference type="PANTHER" id="PTHR11178">
    <property type="entry name" value="IRON-SULFUR CLUSTER SCAFFOLD PROTEIN NFU-RELATED"/>
    <property type="match status" value="1"/>
</dbReference>
<dbReference type="Pfam" id="PF01106">
    <property type="entry name" value="NifU"/>
    <property type="match status" value="1"/>
</dbReference>
<dbReference type="SUPFAM" id="SSF117916">
    <property type="entry name" value="Fe-S cluster assembly (FSCA) domain-like"/>
    <property type="match status" value="1"/>
</dbReference>
<dbReference type="SUPFAM" id="SSF89360">
    <property type="entry name" value="HesB-like domain"/>
    <property type="match status" value="1"/>
</dbReference>
<gene>
    <name evidence="1" type="primary">nfuA</name>
    <name type="ordered locus">XfasM23_2084</name>
</gene>
<reference key="1">
    <citation type="journal article" date="2010" name="J. Bacteriol.">
        <title>Whole genome sequences of two Xylella fastidiosa strains (M12 and M23) causing almond leaf scorch disease in California.</title>
        <authorList>
            <person name="Chen J."/>
            <person name="Xie G."/>
            <person name="Han S."/>
            <person name="Chertkov O."/>
            <person name="Sims D."/>
            <person name="Civerolo E.L."/>
        </authorList>
    </citation>
    <scope>NUCLEOTIDE SEQUENCE [LARGE SCALE GENOMIC DNA]</scope>
    <source>
        <strain>M23</strain>
    </source>
</reference>
<evidence type="ECO:0000255" key="1">
    <source>
        <dbReference type="HAMAP-Rule" id="MF_01637"/>
    </source>
</evidence>
<comment type="function">
    <text evidence="1">Involved in iron-sulfur cluster biogenesis. Binds a 4Fe-4S cluster, can transfer this cluster to apoproteins, and thereby intervenes in the maturation of Fe/S proteins. Could also act as a scaffold/chaperone for damaged Fe/S proteins.</text>
</comment>
<comment type="cofactor">
    <cofactor evidence="1">
        <name>[4Fe-4S] cluster</name>
        <dbReference type="ChEBI" id="CHEBI:49883"/>
    </cofactor>
    <text evidence="1">Binds 1 [4Fe-4S] cluster per subunit. The cluster is presumably bound at the interface of two monomers.</text>
</comment>
<comment type="subunit">
    <text evidence="1">Homodimer.</text>
</comment>
<comment type="similarity">
    <text evidence="1">Belongs to the NfuA family.</text>
</comment>
<sequence length="199" mass="21317">MIQISDTAKSHFLKLIQREGVPGMGVRLSAVDPGTPRADARLEFADPSELVGDEWLIDCGDFTLYVASASVAWLDGAEIDYVTQATGSQQLIIKAPKIKGQELSQVASLVERVCWVVENEINPQLASHGGRVEVQEVSAEGVVLLRFGGGCHGCGMADVTLKQGVEKTLMDRVHGVIAVRDATDHSTGAAPYISRDFSP</sequence>
<keyword id="KW-0004">4Fe-4S</keyword>
<keyword id="KW-0408">Iron</keyword>
<keyword id="KW-0411">Iron-sulfur</keyword>
<keyword id="KW-0479">Metal-binding</keyword>
<proteinExistence type="inferred from homology"/>
<feature type="chain" id="PRO_1000186793" description="Fe/S biogenesis protein NfuA">
    <location>
        <begin position="1"/>
        <end position="199"/>
    </location>
</feature>
<feature type="binding site" evidence="1">
    <location>
        <position position="151"/>
    </location>
    <ligand>
        <name>[4Fe-4S] cluster</name>
        <dbReference type="ChEBI" id="CHEBI:49883"/>
    </ligand>
</feature>
<feature type="binding site" evidence="1">
    <location>
        <position position="154"/>
    </location>
    <ligand>
        <name>[4Fe-4S] cluster</name>
        <dbReference type="ChEBI" id="CHEBI:49883"/>
    </ligand>
</feature>